<organism>
    <name type="scientific">Oryza sativa subsp. japonica</name>
    <name type="common">Rice</name>
    <dbReference type="NCBI Taxonomy" id="39947"/>
    <lineage>
        <taxon>Eukaryota</taxon>
        <taxon>Viridiplantae</taxon>
        <taxon>Streptophyta</taxon>
        <taxon>Embryophyta</taxon>
        <taxon>Tracheophyta</taxon>
        <taxon>Spermatophyta</taxon>
        <taxon>Magnoliopsida</taxon>
        <taxon>Liliopsida</taxon>
        <taxon>Poales</taxon>
        <taxon>Poaceae</taxon>
        <taxon>BOP clade</taxon>
        <taxon>Oryzoideae</taxon>
        <taxon>Oryzeae</taxon>
        <taxon>Oryzinae</taxon>
        <taxon>Oryza</taxon>
        <taxon>Oryza sativa</taxon>
    </lineage>
</organism>
<gene>
    <name type="ordered locus">Os02g0685600</name>
    <name type="ordered locus">LOC_Os02g46080</name>
    <name type="ORF">OJ1717_A09.24</name>
</gene>
<comment type="catalytic activity">
    <reaction>
        <text>O-phospho-L-seryl-[protein] + H2O = L-seryl-[protein] + phosphate</text>
        <dbReference type="Rhea" id="RHEA:20629"/>
        <dbReference type="Rhea" id="RHEA-COMP:9863"/>
        <dbReference type="Rhea" id="RHEA-COMP:11604"/>
        <dbReference type="ChEBI" id="CHEBI:15377"/>
        <dbReference type="ChEBI" id="CHEBI:29999"/>
        <dbReference type="ChEBI" id="CHEBI:43474"/>
        <dbReference type="ChEBI" id="CHEBI:83421"/>
        <dbReference type="EC" id="3.1.3.16"/>
    </reaction>
</comment>
<comment type="catalytic activity">
    <reaction>
        <text>O-phospho-L-threonyl-[protein] + H2O = L-threonyl-[protein] + phosphate</text>
        <dbReference type="Rhea" id="RHEA:47004"/>
        <dbReference type="Rhea" id="RHEA-COMP:11060"/>
        <dbReference type="Rhea" id="RHEA-COMP:11605"/>
        <dbReference type="ChEBI" id="CHEBI:15377"/>
        <dbReference type="ChEBI" id="CHEBI:30013"/>
        <dbReference type="ChEBI" id="CHEBI:43474"/>
        <dbReference type="ChEBI" id="CHEBI:61977"/>
        <dbReference type="EC" id="3.1.3.16"/>
    </reaction>
</comment>
<comment type="cofactor">
    <cofactor evidence="1">
        <name>Mg(2+)</name>
        <dbReference type="ChEBI" id="CHEBI:18420"/>
    </cofactor>
    <cofactor evidence="1">
        <name>Mn(2+)</name>
        <dbReference type="ChEBI" id="CHEBI:29035"/>
    </cofactor>
    <text evidence="1">Binds 2 magnesium or manganese ions per subunit.</text>
</comment>
<comment type="similarity">
    <text evidence="3">Belongs to the PP2C family.</text>
</comment>
<comment type="sequence caution" evidence="3">
    <conflict type="frameshift">
        <sequence resource="EMBL" id="AK111835"/>
    </conflict>
</comment>
<protein>
    <recommendedName>
        <fullName>Probable protein phosphatase 2C 25</fullName>
        <shortName>OsPP2C25</shortName>
        <ecNumber>3.1.3.16</ecNumber>
    </recommendedName>
</protein>
<evidence type="ECO:0000250" key="1"/>
<evidence type="ECO:0000255" key="2">
    <source>
        <dbReference type="PROSITE-ProRule" id="PRU01082"/>
    </source>
</evidence>
<evidence type="ECO:0000305" key="3"/>
<feature type="chain" id="PRO_0000363271" description="Probable protein phosphatase 2C 25">
    <location>
        <begin position="1"/>
        <end position="387"/>
    </location>
</feature>
<feature type="domain" description="PPM-type phosphatase" evidence="2">
    <location>
        <begin position="52"/>
        <end position="351"/>
    </location>
</feature>
<feature type="binding site" evidence="1">
    <location>
        <position position="83"/>
    </location>
    <ligand>
        <name>Mn(2+)</name>
        <dbReference type="ChEBI" id="CHEBI:29035"/>
        <label>1</label>
    </ligand>
</feature>
<feature type="binding site" evidence="1">
    <location>
        <position position="83"/>
    </location>
    <ligand>
        <name>Mn(2+)</name>
        <dbReference type="ChEBI" id="CHEBI:29035"/>
        <label>2</label>
    </ligand>
</feature>
<feature type="binding site" evidence="1">
    <location>
        <position position="84"/>
    </location>
    <ligand>
        <name>Mn(2+)</name>
        <dbReference type="ChEBI" id="CHEBI:29035"/>
        <label>1</label>
    </ligand>
</feature>
<feature type="binding site" evidence="1">
    <location>
        <position position="283"/>
    </location>
    <ligand>
        <name>Mn(2+)</name>
        <dbReference type="ChEBI" id="CHEBI:29035"/>
        <label>2</label>
    </ligand>
</feature>
<feature type="binding site" evidence="1">
    <location>
        <position position="342"/>
    </location>
    <ligand>
        <name>Mn(2+)</name>
        <dbReference type="ChEBI" id="CHEBI:29035"/>
        <label>2</label>
    </ligand>
</feature>
<sequence>MFSWLLRIASACLGPARRYARTRKDEDGGDNGGGVADGLLWSRDLGRHAAGEFSFAVVQANEALEDHSQVETGSAATFVGVYDGHGGADAARFISDHLFAHLIRLARESETVSEEVVRGAFSATEEGFLTLVRRTQFLKPMIAAVGSCCLVGIIWRGVLYVANLGDSRAVVGYLGRTNKITAEQITRDHNACKEEVRQELISRHPDDSQIVVLKHGVWRIKGIIQVSRTIGDAYLKRREFALDPSITRFRLSEPLRRPVLTAEPSICTRVLSLQDQFVIFASDGLWEHLTNQQAVDIVYKNPRAGIAKRLVNTALKEAARKREMRFVDLKKVEKGVRRFFHDDITVVVVYIDHELLQEKNVSVPELSVRGFVDSVGPSRISGFDAIS</sequence>
<dbReference type="EC" id="3.1.3.16"/>
<dbReference type="EMBL" id="AP004071">
    <property type="protein sequence ID" value="BAD07571.1"/>
    <property type="molecule type" value="Genomic_DNA"/>
</dbReference>
<dbReference type="EMBL" id="AP008208">
    <property type="protein sequence ID" value="BAF09680.1"/>
    <property type="molecule type" value="Genomic_DNA"/>
</dbReference>
<dbReference type="EMBL" id="AP014958">
    <property type="protein sequence ID" value="BAS80331.1"/>
    <property type="molecule type" value="Genomic_DNA"/>
</dbReference>
<dbReference type="EMBL" id="AK111835">
    <property type="status" value="NOT_ANNOTATED_CDS"/>
    <property type="molecule type" value="mRNA"/>
</dbReference>
<dbReference type="RefSeq" id="XP_015625262.1">
    <property type="nucleotide sequence ID" value="XM_015769776.1"/>
</dbReference>
<dbReference type="SMR" id="Q6ZHC8"/>
<dbReference type="FunCoup" id="Q6ZHC8">
    <property type="interactions" value="1998"/>
</dbReference>
<dbReference type="STRING" id="39947.Q6ZHC8"/>
<dbReference type="PaxDb" id="39947-Q6ZHC8"/>
<dbReference type="EnsemblPlants" id="Os02t0685600-01">
    <property type="protein sequence ID" value="Os02t0685600-01"/>
    <property type="gene ID" value="Os02g0685600"/>
</dbReference>
<dbReference type="Gramene" id="Os02t0685600-01">
    <property type="protein sequence ID" value="Os02t0685600-01"/>
    <property type="gene ID" value="Os02g0685600"/>
</dbReference>
<dbReference type="KEGG" id="dosa:Os02g0685600"/>
<dbReference type="eggNOG" id="KOG0700">
    <property type="taxonomic scope" value="Eukaryota"/>
</dbReference>
<dbReference type="HOGENOM" id="CLU_013173_2_0_1"/>
<dbReference type="InParanoid" id="Q6ZHC8"/>
<dbReference type="OMA" id="GRMNRDD"/>
<dbReference type="OrthoDB" id="420076at2759"/>
<dbReference type="Proteomes" id="UP000000763">
    <property type="component" value="Chromosome 2"/>
</dbReference>
<dbReference type="Proteomes" id="UP000059680">
    <property type="component" value="Chromosome 2"/>
</dbReference>
<dbReference type="GO" id="GO:0046872">
    <property type="term" value="F:metal ion binding"/>
    <property type="evidence" value="ECO:0007669"/>
    <property type="project" value="UniProtKB-KW"/>
</dbReference>
<dbReference type="GO" id="GO:0004722">
    <property type="term" value="F:protein serine/threonine phosphatase activity"/>
    <property type="evidence" value="ECO:0000318"/>
    <property type="project" value="GO_Central"/>
</dbReference>
<dbReference type="GO" id="GO:1902531">
    <property type="term" value="P:regulation of intracellular signal transduction"/>
    <property type="evidence" value="ECO:0000318"/>
    <property type="project" value="GO_Central"/>
</dbReference>
<dbReference type="CDD" id="cd00143">
    <property type="entry name" value="PP2Cc"/>
    <property type="match status" value="1"/>
</dbReference>
<dbReference type="FunFam" id="3.60.40.10:FF:000020">
    <property type="entry name" value="Probable protein phosphatase 2C 42"/>
    <property type="match status" value="1"/>
</dbReference>
<dbReference type="Gene3D" id="3.60.40.10">
    <property type="entry name" value="PPM-type phosphatase domain"/>
    <property type="match status" value="1"/>
</dbReference>
<dbReference type="InterPro" id="IPR015655">
    <property type="entry name" value="PP2C"/>
</dbReference>
<dbReference type="InterPro" id="IPR000222">
    <property type="entry name" value="PP2C_BS"/>
</dbReference>
<dbReference type="InterPro" id="IPR036457">
    <property type="entry name" value="PPM-type-like_dom_sf"/>
</dbReference>
<dbReference type="InterPro" id="IPR001932">
    <property type="entry name" value="PPM-type_phosphatase-like_dom"/>
</dbReference>
<dbReference type="PANTHER" id="PTHR47992">
    <property type="entry name" value="PROTEIN PHOSPHATASE"/>
    <property type="match status" value="1"/>
</dbReference>
<dbReference type="Pfam" id="PF00481">
    <property type="entry name" value="PP2C"/>
    <property type="match status" value="1"/>
</dbReference>
<dbReference type="SMART" id="SM00332">
    <property type="entry name" value="PP2Cc"/>
    <property type="match status" value="1"/>
</dbReference>
<dbReference type="SUPFAM" id="SSF81606">
    <property type="entry name" value="PP2C-like"/>
    <property type="match status" value="1"/>
</dbReference>
<dbReference type="PROSITE" id="PS01032">
    <property type="entry name" value="PPM_1"/>
    <property type="match status" value="1"/>
</dbReference>
<dbReference type="PROSITE" id="PS51746">
    <property type="entry name" value="PPM_2"/>
    <property type="match status" value="1"/>
</dbReference>
<reference key="1">
    <citation type="journal article" date="2005" name="Nature">
        <title>The map-based sequence of the rice genome.</title>
        <authorList>
            <consortium name="International rice genome sequencing project (IRGSP)"/>
        </authorList>
    </citation>
    <scope>NUCLEOTIDE SEQUENCE [LARGE SCALE GENOMIC DNA]</scope>
    <source>
        <strain>cv. Nipponbare</strain>
    </source>
</reference>
<reference key="2">
    <citation type="journal article" date="2008" name="Nucleic Acids Res.">
        <title>The rice annotation project database (RAP-DB): 2008 update.</title>
        <authorList>
            <consortium name="The rice annotation project (RAP)"/>
        </authorList>
    </citation>
    <scope>GENOME REANNOTATION</scope>
    <source>
        <strain>cv. Nipponbare</strain>
    </source>
</reference>
<reference key="3">
    <citation type="journal article" date="2013" name="Rice">
        <title>Improvement of the Oryza sativa Nipponbare reference genome using next generation sequence and optical map data.</title>
        <authorList>
            <person name="Kawahara Y."/>
            <person name="de la Bastide M."/>
            <person name="Hamilton J.P."/>
            <person name="Kanamori H."/>
            <person name="McCombie W.R."/>
            <person name="Ouyang S."/>
            <person name="Schwartz D.C."/>
            <person name="Tanaka T."/>
            <person name="Wu J."/>
            <person name="Zhou S."/>
            <person name="Childs K.L."/>
            <person name="Davidson R.M."/>
            <person name="Lin H."/>
            <person name="Quesada-Ocampo L."/>
            <person name="Vaillancourt B."/>
            <person name="Sakai H."/>
            <person name="Lee S.S."/>
            <person name="Kim J."/>
            <person name="Numa H."/>
            <person name="Itoh T."/>
            <person name="Buell C.R."/>
            <person name="Matsumoto T."/>
        </authorList>
    </citation>
    <scope>GENOME REANNOTATION</scope>
    <source>
        <strain>cv. Nipponbare</strain>
    </source>
</reference>
<reference key="4">
    <citation type="journal article" date="2003" name="Science">
        <title>Collection, mapping, and annotation of over 28,000 cDNA clones from japonica rice.</title>
        <authorList>
            <consortium name="The rice full-length cDNA consortium"/>
        </authorList>
    </citation>
    <scope>NUCLEOTIDE SEQUENCE [LARGE SCALE MRNA]</scope>
    <source>
        <strain>cv. Nipponbare</strain>
    </source>
</reference>
<reference key="5">
    <citation type="journal article" date="2008" name="BMC Genomics">
        <title>Genome-wide and expression analysis of protein phosphatase 2C in rice and Arabidopsis.</title>
        <authorList>
            <person name="Xue T."/>
            <person name="Wang D."/>
            <person name="Zhang S."/>
            <person name="Ehlting J."/>
            <person name="Ni F."/>
            <person name="Jacab S."/>
            <person name="Zheng C."/>
            <person name="Zhong Y."/>
        </authorList>
    </citation>
    <scope>GENE FAMILY</scope>
    <scope>NOMENCLATURE</scope>
</reference>
<proteinExistence type="evidence at transcript level"/>
<name>P2C25_ORYSJ</name>
<keyword id="KW-0378">Hydrolase</keyword>
<keyword id="KW-0460">Magnesium</keyword>
<keyword id="KW-0464">Manganese</keyword>
<keyword id="KW-0479">Metal-binding</keyword>
<keyword id="KW-0904">Protein phosphatase</keyword>
<keyword id="KW-1185">Reference proteome</keyword>
<accession>Q6ZHC8</accession>
<accession>A0A0P0VN28</accession>